<keyword id="KW-0223">Dioxygenase</keyword>
<keyword id="KW-0408">Iron</keyword>
<keyword id="KW-0479">Metal-binding</keyword>
<keyword id="KW-0560">Oxidoreductase</keyword>
<keyword id="KW-1185">Reference proteome</keyword>
<protein>
    <recommendedName>
        <fullName evidence="2">Phytanoyl-CoA dioxygenase domain-containing protein 1</fullName>
        <shortName evidence="2">Protein PHYHD1</shortName>
        <ecNumber evidence="2">1.14.11.-</ecNumber>
    </recommendedName>
</protein>
<dbReference type="EC" id="1.14.11.-" evidence="2"/>
<dbReference type="EMBL" id="BC085396">
    <property type="protein sequence ID" value="AAH85396.1"/>
    <property type="molecule type" value="mRNA"/>
</dbReference>
<dbReference type="RefSeq" id="NP_001007446.1">
    <property type="nucleotide sequence ID" value="NM_001007445.1"/>
</dbReference>
<dbReference type="RefSeq" id="XP_005161033.1">
    <property type="nucleotide sequence ID" value="XM_005160976.5"/>
</dbReference>
<dbReference type="SMR" id="Q5U3U0"/>
<dbReference type="FunCoup" id="Q5U3U0">
    <property type="interactions" value="1017"/>
</dbReference>
<dbReference type="STRING" id="7955.ENSDARP00000123099"/>
<dbReference type="PaxDb" id="7955-ENSDARP00000123099"/>
<dbReference type="DNASU" id="492804"/>
<dbReference type="Ensembl" id="ENSDART00000025612">
    <property type="protein sequence ID" value="ENSDARP00000015072"/>
    <property type="gene ID" value="ENSDARG00000029905"/>
</dbReference>
<dbReference type="Ensembl" id="ENSDART00000147187">
    <property type="protein sequence ID" value="ENSDARP00000123099"/>
    <property type="gene ID" value="ENSDARG00000029905"/>
</dbReference>
<dbReference type="GeneID" id="492804"/>
<dbReference type="KEGG" id="dre:492804"/>
<dbReference type="AGR" id="ZFIN:ZDB-GENE-041114-159"/>
<dbReference type="CTD" id="254295"/>
<dbReference type="ZFIN" id="ZDB-GENE-041114-159">
    <property type="gene designation" value="phyhd1"/>
</dbReference>
<dbReference type="eggNOG" id="KOG3290">
    <property type="taxonomic scope" value="Eukaryota"/>
</dbReference>
<dbReference type="InParanoid" id="Q5U3U0"/>
<dbReference type="OMA" id="KYSEDNW"/>
<dbReference type="OrthoDB" id="445007at2759"/>
<dbReference type="PhylomeDB" id="Q5U3U0"/>
<dbReference type="TreeFam" id="TF300011"/>
<dbReference type="PRO" id="PR:Q5U3U0"/>
<dbReference type="Proteomes" id="UP000000437">
    <property type="component" value="Chromosome 21"/>
</dbReference>
<dbReference type="Bgee" id="ENSDARG00000029905">
    <property type="expression patterns" value="Expressed in liver and 27 other cell types or tissues"/>
</dbReference>
<dbReference type="ExpressionAtlas" id="Q5U3U0">
    <property type="expression patterns" value="baseline and differential"/>
</dbReference>
<dbReference type="GO" id="GO:0051213">
    <property type="term" value="F:dioxygenase activity"/>
    <property type="evidence" value="ECO:0007669"/>
    <property type="project" value="UniProtKB-KW"/>
</dbReference>
<dbReference type="GO" id="GO:0046872">
    <property type="term" value="F:metal ion binding"/>
    <property type="evidence" value="ECO:0007669"/>
    <property type="project" value="UniProtKB-KW"/>
</dbReference>
<dbReference type="Gene3D" id="2.60.120.620">
    <property type="entry name" value="q2cbj1_9rhob like domain"/>
    <property type="match status" value="1"/>
</dbReference>
<dbReference type="InterPro" id="IPR008775">
    <property type="entry name" value="Phytyl_CoA_dOase-like"/>
</dbReference>
<dbReference type="PANTHER" id="PTHR20883">
    <property type="entry name" value="PHYTANOYL-COA DIOXYGENASE DOMAIN CONTAINING 1"/>
    <property type="match status" value="1"/>
</dbReference>
<dbReference type="PANTHER" id="PTHR20883:SF15">
    <property type="entry name" value="PHYTANOYL-COA DIOXYGENASE DOMAIN-CONTAINING PROTEIN 1"/>
    <property type="match status" value="1"/>
</dbReference>
<dbReference type="Pfam" id="PF05721">
    <property type="entry name" value="PhyH"/>
    <property type="match status" value="1"/>
</dbReference>
<dbReference type="SUPFAM" id="SSF51197">
    <property type="entry name" value="Clavaminate synthase-like"/>
    <property type="match status" value="1"/>
</dbReference>
<sequence length="291" mass="33194">MDVLTDQDVQKFRDEGYLVLEGLLSPEECDALRRRMSEIIESMDVPEHCRTQFSTDHDEQLKTQGNADYFITSGDKIRFFFEKGVFDDKGEFVVPKEQSLNKIGHALHAYEPLFKRVTHSPKVQNICKKLELINPVILQSMYIFKQPGIGGEVTPHQDATFLYTQPLGRVMGVWVALEDAMQENGCLWFIPGSHNDGITRRMVRTPKGTFPLTDFIGREKDYDDKLFVPAPVKKGGAVLIHGEVVHRSAANTSDASRHVYTFHIMESENTVWSPENWLQATEELPFPSLYT</sequence>
<comment type="function">
    <text evidence="2">2-oxoglutarate(2OG)-dependent dioxygenase that catalyzes the conversion of 2-oxoglutarate to succinate and CO(2) in an iron-dependent manner. However, does not couple 2OG turnover to the hydroxylation of acyl-coenzyme A derivatives, implying that it is not directly involved in phytanoyl coenzyme-A metabolism. Does not show detectable activity towards fatty acid CoA thioesters.</text>
</comment>
<comment type="cofactor">
    <cofactor evidence="2">
        <name>Fe cation</name>
        <dbReference type="ChEBI" id="CHEBI:24875"/>
    </cofactor>
</comment>
<comment type="similarity">
    <text evidence="3">Belongs to the PhyH family. PHYHD1 subfamily.</text>
</comment>
<feature type="chain" id="PRO_0000313636" description="Phytanoyl-CoA dioxygenase domain-containing protein 1">
    <location>
        <begin position="1"/>
        <end position="291"/>
    </location>
</feature>
<feature type="binding site" evidence="1">
    <location>
        <position position="102"/>
    </location>
    <ligand>
        <name>2-oxoglutarate</name>
        <dbReference type="ChEBI" id="CHEBI:16810"/>
    </ligand>
</feature>
<feature type="binding site" evidence="1">
    <location>
        <position position="141"/>
    </location>
    <ligand>
        <name>2-oxoglutarate</name>
        <dbReference type="ChEBI" id="CHEBI:16810"/>
    </ligand>
</feature>
<feature type="binding site" evidence="1">
    <location>
        <begin position="156"/>
        <end position="158"/>
    </location>
    <ligand>
        <name>2-oxoglutarate</name>
        <dbReference type="ChEBI" id="CHEBI:16810"/>
    </ligand>
</feature>
<feature type="binding site" evidence="1">
    <location>
        <position position="156"/>
    </location>
    <ligand>
        <name>Fe cation</name>
        <dbReference type="ChEBI" id="CHEBI:24875"/>
    </ligand>
</feature>
<feature type="binding site" evidence="1">
    <location>
        <position position="158"/>
    </location>
    <ligand>
        <name>Fe cation</name>
        <dbReference type="ChEBI" id="CHEBI:24875"/>
    </ligand>
</feature>
<feature type="binding site" evidence="1">
    <location>
        <position position="174"/>
    </location>
    <ligand>
        <name>2-oxoglutarate</name>
        <dbReference type="ChEBI" id="CHEBI:16810"/>
    </ligand>
</feature>
<feature type="binding site" evidence="1">
    <location>
        <position position="246"/>
    </location>
    <ligand>
        <name>Fe cation</name>
        <dbReference type="ChEBI" id="CHEBI:24875"/>
    </ligand>
</feature>
<feature type="binding site" evidence="1">
    <location>
        <position position="248"/>
    </location>
    <ligand>
        <name>2-oxoglutarate</name>
        <dbReference type="ChEBI" id="CHEBI:16810"/>
    </ligand>
</feature>
<feature type="binding site" evidence="1">
    <location>
        <position position="257"/>
    </location>
    <ligand>
        <name>2-oxoglutarate</name>
        <dbReference type="ChEBI" id="CHEBI:16810"/>
    </ligand>
</feature>
<organism>
    <name type="scientific">Danio rerio</name>
    <name type="common">Zebrafish</name>
    <name type="synonym">Brachydanio rerio</name>
    <dbReference type="NCBI Taxonomy" id="7955"/>
    <lineage>
        <taxon>Eukaryota</taxon>
        <taxon>Metazoa</taxon>
        <taxon>Chordata</taxon>
        <taxon>Craniata</taxon>
        <taxon>Vertebrata</taxon>
        <taxon>Euteleostomi</taxon>
        <taxon>Actinopterygii</taxon>
        <taxon>Neopterygii</taxon>
        <taxon>Teleostei</taxon>
        <taxon>Ostariophysi</taxon>
        <taxon>Cypriniformes</taxon>
        <taxon>Danionidae</taxon>
        <taxon>Danioninae</taxon>
        <taxon>Danio</taxon>
    </lineage>
</organism>
<name>PHYD1_DANRE</name>
<proteinExistence type="evidence at transcript level"/>
<accession>Q5U3U0</accession>
<gene>
    <name type="primary">phyhd1</name>
    <name type="ORF">zgc:101639</name>
</gene>
<evidence type="ECO:0000250" key="1">
    <source>
        <dbReference type="UniProtKB" id="O14832"/>
    </source>
</evidence>
<evidence type="ECO:0000250" key="2">
    <source>
        <dbReference type="UniProtKB" id="Q5SRE7"/>
    </source>
</evidence>
<evidence type="ECO:0000305" key="3"/>
<reference key="1">
    <citation type="submission" date="2004-11" db="EMBL/GenBank/DDBJ databases">
        <authorList>
            <consortium name="NIH - Zebrafish Gene Collection (ZGC) project"/>
        </authorList>
    </citation>
    <scope>NUCLEOTIDE SEQUENCE [LARGE SCALE MRNA]</scope>
    <source>
        <tissue>Embryo</tissue>
    </source>
</reference>